<keyword id="KW-0687">Ribonucleoprotein</keyword>
<keyword id="KW-0689">Ribosomal protein</keyword>
<keyword id="KW-0694">RNA-binding</keyword>
<keyword id="KW-0699">rRNA-binding</keyword>
<accession>Q661E2</accession>
<organism>
    <name type="scientific">Borrelia garinii subsp. bavariensis (strain ATCC BAA-2496 / DSM 23469 / PBi)</name>
    <name type="common">Borreliella bavariensis</name>
    <dbReference type="NCBI Taxonomy" id="290434"/>
    <lineage>
        <taxon>Bacteria</taxon>
        <taxon>Pseudomonadati</taxon>
        <taxon>Spirochaetota</taxon>
        <taxon>Spirochaetia</taxon>
        <taxon>Spirochaetales</taxon>
        <taxon>Borreliaceae</taxon>
        <taxon>Borreliella</taxon>
    </lineage>
</organism>
<dbReference type="EMBL" id="CP000013">
    <property type="protein sequence ID" value="AAU07329.1"/>
    <property type="molecule type" value="Genomic_DNA"/>
</dbReference>
<dbReference type="RefSeq" id="WP_011193798.1">
    <property type="nucleotide sequence ID" value="NZ_CP028872.1"/>
</dbReference>
<dbReference type="SMR" id="Q661E2"/>
<dbReference type="GeneID" id="45161274"/>
<dbReference type="KEGG" id="bga:BG0490"/>
<dbReference type="eggNOG" id="COG0088">
    <property type="taxonomic scope" value="Bacteria"/>
</dbReference>
<dbReference type="HOGENOM" id="CLU_041575_5_2_12"/>
<dbReference type="OrthoDB" id="9803201at2"/>
<dbReference type="Proteomes" id="UP000002276">
    <property type="component" value="Chromosome"/>
</dbReference>
<dbReference type="GO" id="GO:1990904">
    <property type="term" value="C:ribonucleoprotein complex"/>
    <property type="evidence" value="ECO:0007669"/>
    <property type="project" value="UniProtKB-KW"/>
</dbReference>
<dbReference type="GO" id="GO:0005840">
    <property type="term" value="C:ribosome"/>
    <property type="evidence" value="ECO:0007669"/>
    <property type="project" value="UniProtKB-KW"/>
</dbReference>
<dbReference type="GO" id="GO:0019843">
    <property type="term" value="F:rRNA binding"/>
    <property type="evidence" value="ECO:0007669"/>
    <property type="project" value="UniProtKB-UniRule"/>
</dbReference>
<dbReference type="GO" id="GO:0003735">
    <property type="term" value="F:structural constituent of ribosome"/>
    <property type="evidence" value="ECO:0007669"/>
    <property type="project" value="InterPro"/>
</dbReference>
<dbReference type="GO" id="GO:0006412">
    <property type="term" value="P:translation"/>
    <property type="evidence" value="ECO:0007669"/>
    <property type="project" value="UniProtKB-UniRule"/>
</dbReference>
<dbReference type="Gene3D" id="3.40.1370.10">
    <property type="match status" value="1"/>
</dbReference>
<dbReference type="HAMAP" id="MF_01328_B">
    <property type="entry name" value="Ribosomal_uL4_B"/>
    <property type="match status" value="1"/>
</dbReference>
<dbReference type="InterPro" id="IPR002136">
    <property type="entry name" value="Ribosomal_uL4"/>
</dbReference>
<dbReference type="InterPro" id="IPR013005">
    <property type="entry name" value="Ribosomal_uL4-like"/>
</dbReference>
<dbReference type="InterPro" id="IPR023574">
    <property type="entry name" value="Ribosomal_uL4_dom_sf"/>
</dbReference>
<dbReference type="NCBIfam" id="TIGR03953">
    <property type="entry name" value="rplD_bact"/>
    <property type="match status" value="1"/>
</dbReference>
<dbReference type="PANTHER" id="PTHR10746">
    <property type="entry name" value="50S RIBOSOMAL PROTEIN L4"/>
    <property type="match status" value="1"/>
</dbReference>
<dbReference type="PANTHER" id="PTHR10746:SF6">
    <property type="entry name" value="LARGE RIBOSOMAL SUBUNIT PROTEIN UL4M"/>
    <property type="match status" value="1"/>
</dbReference>
<dbReference type="Pfam" id="PF00573">
    <property type="entry name" value="Ribosomal_L4"/>
    <property type="match status" value="1"/>
</dbReference>
<dbReference type="SUPFAM" id="SSF52166">
    <property type="entry name" value="Ribosomal protein L4"/>
    <property type="match status" value="1"/>
</dbReference>
<reference key="1">
    <citation type="journal article" date="2004" name="Nucleic Acids Res.">
        <title>Comparative analysis of the Borrelia garinii genome.</title>
        <authorList>
            <person name="Gloeckner G."/>
            <person name="Lehmann R."/>
            <person name="Romualdi A."/>
            <person name="Pradella S."/>
            <person name="Schulte-Spechtel U."/>
            <person name="Schilhabel M."/>
            <person name="Wilske B."/>
            <person name="Suehnel J."/>
            <person name="Platzer M."/>
        </authorList>
    </citation>
    <scope>NUCLEOTIDE SEQUENCE [LARGE SCALE GENOMIC DNA]</scope>
    <source>
        <strain>ATCC BAA-2496 / DSM 23469 / PBi</strain>
    </source>
</reference>
<proteinExistence type="inferred from homology"/>
<feature type="chain" id="PRO_0000242348" description="Large ribosomal subunit protein uL4">
    <location>
        <begin position="1"/>
        <end position="209"/>
    </location>
</feature>
<feature type="region of interest" description="Disordered" evidence="2">
    <location>
        <begin position="46"/>
        <end position="71"/>
    </location>
</feature>
<feature type="compositionally biased region" description="Basic residues" evidence="2">
    <location>
        <begin position="59"/>
        <end position="71"/>
    </location>
</feature>
<protein>
    <recommendedName>
        <fullName evidence="1">Large ribosomal subunit protein uL4</fullName>
    </recommendedName>
    <alternativeName>
        <fullName evidence="3">50S ribosomal protein L4</fullName>
    </alternativeName>
</protein>
<sequence>MERKVFSKDGKEIGTINLDDRVFNIEISHGSIYNAIKNELSNLRVGTSSTKTRSEVRGSSKKPWKQKGTGRARVGTKRNPIWIGGGIALGPKPRDYSYRLPKKVKRLAFKSVLSLRAADENNFKVVENFNIESGKTKDLALIIKNFASFNGKVVILLGNDDQMIKRAGKNIRDLKILSFNKLRVVDLFYAKNLIALESAVNKLNEFYVK</sequence>
<gene>
    <name evidence="1" type="primary">rplD</name>
    <name type="ordered locus">BG0490</name>
</gene>
<name>RL4_BORGP</name>
<evidence type="ECO:0000255" key="1">
    <source>
        <dbReference type="HAMAP-Rule" id="MF_01328"/>
    </source>
</evidence>
<evidence type="ECO:0000256" key="2">
    <source>
        <dbReference type="SAM" id="MobiDB-lite"/>
    </source>
</evidence>
<evidence type="ECO:0000305" key="3"/>
<comment type="function">
    <text evidence="1">One of the primary rRNA binding proteins, this protein initially binds near the 5'-end of the 23S rRNA. It is important during the early stages of 50S assembly. It makes multiple contacts with different domains of the 23S rRNA in the assembled 50S subunit and ribosome.</text>
</comment>
<comment type="function">
    <text evidence="1">Forms part of the polypeptide exit tunnel.</text>
</comment>
<comment type="subunit">
    <text evidence="1">Part of the 50S ribosomal subunit.</text>
</comment>
<comment type="similarity">
    <text evidence="1">Belongs to the universal ribosomal protein uL4 family.</text>
</comment>